<keyword id="KW-0963">Cytoplasm</keyword>
<keyword id="KW-0479">Metal-binding</keyword>
<keyword id="KW-0687">Ribonucleoprotein</keyword>
<keyword id="KW-0689">Ribosomal protein</keyword>
<keyword id="KW-0862">Zinc</keyword>
<keyword id="KW-0863">Zinc-finger</keyword>
<evidence type="ECO:0000250" key="1">
    <source>
        <dbReference type="UniProtKB" id="P49166"/>
    </source>
</evidence>
<evidence type="ECO:0000250" key="2">
    <source>
        <dbReference type="UniProtKB" id="P61513"/>
    </source>
</evidence>
<evidence type="ECO:0000305" key="3"/>
<protein>
    <recommendedName>
        <fullName evidence="3">Large ribosomal subunit protein eL43</fullName>
    </recommendedName>
    <alternativeName>
        <fullName>60S ribosomal protein L37a</fullName>
    </alternativeName>
</protein>
<accession>Q90YT0</accession>
<dbReference type="EMBL" id="AF401594">
    <property type="protein sequence ID" value="AAK95166.1"/>
    <property type="molecule type" value="mRNA"/>
</dbReference>
<dbReference type="RefSeq" id="NP_001187062.1">
    <property type="nucleotide sequence ID" value="NM_001200133.1"/>
</dbReference>
<dbReference type="SMR" id="Q90YT0"/>
<dbReference type="STRING" id="7998.ENSIPUP00000032395"/>
<dbReference type="GeneID" id="100304551"/>
<dbReference type="KEGG" id="ipu:100304551"/>
<dbReference type="CTD" id="6168"/>
<dbReference type="OMA" id="GPRYGRK"/>
<dbReference type="OrthoDB" id="10258345at2759"/>
<dbReference type="Proteomes" id="UP000221080">
    <property type="component" value="Chromosome 10"/>
</dbReference>
<dbReference type="GO" id="GO:0022625">
    <property type="term" value="C:cytosolic large ribosomal subunit"/>
    <property type="evidence" value="ECO:0007669"/>
    <property type="project" value="UniProtKB-ARBA"/>
</dbReference>
<dbReference type="GO" id="GO:0070180">
    <property type="term" value="F:large ribosomal subunit rRNA binding"/>
    <property type="evidence" value="ECO:0007669"/>
    <property type="project" value="TreeGrafter"/>
</dbReference>
<dbReference type="GO" id="GO:0003735">
    <property type="term" value="F:structural constituent of ribosome"/>
    <property type="evidence" value="ECO:0007669"/>
    <property type="project" value="InterPro"/>
</dbReference>
<dbReference type="GO" id="GO:0008270">
    <property type="term" value="F:zinc ion binding"/>
    <property type="evidence" value="ECO:0007669"/>
    <property type="project" value="UniProtKB-KW"/>
</dbReference>
<dbReference type="GO" id="GO:0006412">
    <property type="term" value="P:translation"/>
    <property type="evidence" value="ECO:0007669"/>
    <property type="project" value="InterPro"/>
</dbReference>
<dbReference type="FunFam" id="2.20.25.30:FF:000002">
    <property type="entry name" value="60S ribosomal protein L37a"/>
    <property type="match status" value="1"/>
</dbReference>
<dbReference type="Gene3D" id="2.20.25.30">
    <property type="match status" value="1"/>
</dbReference>
<dbReference type="HAMAP" id="MF_00327">
    <property type="entry name" value="Ribosomal_eL43"/>
    <property type="match status" value="1"/>
</dbReference>
<dbReference type="InterPro" id="IPR011331">
    <property type="entry name" value="Ribosomal_eL37/eL43"/>
</dbReference>
<dbReference type="InterPro" id="IPR002674">
    <property type="entry name" value="Ribosomal_eL43"/>
</dbReference>
<dbReference type="InterPro" id="IPR011332">
    <property type="entry name" value="Ribosomal_zn-bd"/>
</dbReference>
<dbReference type="NCBIfam" id="TIGR00280">
    <property type="entry name" value="eL43_euk_arch"/>
    <property type="match status" value="1"/>
</dbReference>
<dbReference type="NCBIfam" id="NF003058">
    <property type="entry name" value="PRK03976.1"/>
    <property type="match status" value="1"/>
</dbReference>
<dbReference type="PANTHER" id="PTHR48188">
    <property type="entry name" value="60S RIBOSOMAL PROTEIN L43"/>
    <property type="match status" value="1"/>
</dbReference>
<dbReference type="PANTHER" id="PTHR48188:SF5">
    <property type="entry name" value="RIBOSOMAL PROTEIN EL43-LIKE-RELATED"/>
    <property type="match status" value="1"/>
</dbReference>
<dbReference type="Pfam" id="PF01780">
    <property type="entry name" value="Ribosomal_L37ae"/>
    <property type="match status" value="1"/>
</dbReference>
<dbReference type="SUPFAM" id="SSF57829">
    <property type="entry name" value="Zn-binding ribosomal proteins"/>
    <property type="match status" value="1"/>
</dbReference>
<feature type="chain" id="PRO_0000139821" description="Large ribosomal subunit protein eL43">
    <location>
        <begin position="1"/>
        <end position="92"/>
    </location>
</feature>
<feature type="zinc finger region" description="C4-type">
    <location>
        <begin position="39"/>
        <end position="60"/>
    </location>
</feature>
<feature type="binding site" evidence="1">
    <location>
        <position position="39"/>
    </location>
    <ligand>
        <name>Zn(2+)</name>
        <dbReference type="ChEBI" id="CHEBI:29105"/>
    </ligand>
</feature>
<feature type="binding site" evidence="1">
    <location>
        <position position="42"/>
    </location>
    <ligand>
        <name>Zn(2+)</name>
        <dbReference type="ChEBI" id="CHEBI:29105"/>
    </ligand>
</feature>
<feature type="binding site" evidence="1">
    <location>
        <position position="57"/>
    </location>
    <ligand>
        <name>Zn(2+)</name>
        <dbReference type="ChEBI" id="CHEBI:29105"/>
    </ligand>
</feature>
<feature type="binding site" evidence="1">
    <location>
        <position position="60"/>
    </location>
    <ligand>
        <name>Zn(2+)</name>
        <dbReference type="ChEBI" id="CHEBI:29105"/>
    </ligand>
</feature>
<sequence>MAKRTKKVGIVGKYGTRYGASLRKMVKKIEISQHAKYTCSFCGKTKMKRRAVGIWHCGSCMKTVAGGAWTYNTTSAVTVKSAIKRLKEMKDQ</sequence>
<organism>
    <name type="scientific">Ictalurus punctatus</name>
    <name type="common">Channel catfish</name>
    <name type="synonym">Silurus punctatus</name>
    <dbReference type="NCBI Taxonomy" id="7998"/>
    <lineage>
        <taxon>Eukaryota</taxon>
        <taxon>Metazoa</taxon>
        <taxon>Chordata</taxon>
        <taxon>Craniata</taxon>
        <taxon>Vertebrata</taxon>
        <taxon>Euteleostomi</taxon>
        <taxon>Actinopterygii</taxon>
        <taxon>Neopterygii</taxon>
        <taxon>Teleostei</taxon>
        <taxon>Ostariophysi</taxon>
        <taxon>Siluriformes</taxon>
        <taxon>Ictaluridae</taxon>
        <taxon>Ictalurus</taxon>
    </lineage>
</organism>
<gene>
    <name type="primary">rpl37a</name>
</gene>
<reference key="1">
    <citation type="journal article" date="2003" name="Gene">
        <title>Translational machinery of channel catfish: II. Complementary DNA and expression of the complete set of 47 60S ribosomal proteins.</title>
        <authorList>
            <person name="Patterson A.P."/>
            <person name="Karsi A."/>
            <person name="Feng J."/>
            <person name="Liu Z.J."/>
        </authorList>
    </citation>
    <scope>NUCLEOTIDE SEQUENCE [MRNA]</scope>
</reference>
<name>RL37A_ICTPU</name>
<proteinExistence type="inferred from homology"/>
<comment type="function">
    <text evidence="2">Component of the large ribosomal subunit. The ribosome is a large ribonucleoprotein complex responsible for the synthesis of proteins in the cell.</text>
</comment>
<comment type="subunit">
    <text evidence="2">Component of the large ribosomal subunit.</text>
</comment>
<comment type="subcellular location">
    <subcellularLocation>
        <location evidence="2">Cytoplasm</location>
    </subcellularLocation>
</comment>
<comment type="similarity">
    <text evidence="3">Belongs to the eukaryotic ribosomal protein eL43 family.</text>
</comment>